<sequence length="102" mass="9992">MKFLIAFVAIAFFACVSAGGYGNIGLGGYGLGNVGYLQNHGGGYGRRPILISKSSNPSAAAAAAAASSGVNSGLYNQRGVIGYELDGGILGGHGGYGGGLGY</sequence>
<organism>
    <name type="scientific">Drosophila grimshawi</name>
    <name type="common">Hawaiian fruit fly</name>
    <name type="synonym">Idiomyia grimshawi</name>
    <dbReference type="NCBI Taxonomy" id="7222"/>
    <lineage>
        <taxon>Eukaryota</taxon>
        <taxon>Metazoa</taxon>
        <taxon>Ecdysozoa</taxon>
        <taxon>Arthropoda</taxon>
        <taxon>Hexapoda</taxon>
        <taxon>Insecta</taxon>
        <taxon>Pterygota</taxon>
        <taxon>Neoptera</taxon>
        <taxon>Endopterygota</taxon>
        <taxon>Diptera</taxon>
        <taxon>Brachycera</taxon>
        <taxon>Muscomorpha</taxon>
        <taxon>Ephydroidea</taxon>
        <taxon>Drosophilidae</taxon>
        <taxon>Drosophila</taxon>
        <taxon>Hawaiian Drosophila</taxon>
    </lineage>
</organism>
<reference key="1">
    <citation type="journal article" date="1988" name="Genetics">
        <title>Evolution of the autosomal chorion locus in Drosophila. I. General organization of the locus and sequence comparisons of genes s15 and s19 in evolutionary distant species.</title>
        <authorList>
            <person name="Martinez-Cruzado J.C."/>
            <person name="Swimmer C."/>
            <person name="Fenerjian M.G."/>
            <person name="Kafatos F.C."/>
        </authorList>
    </citation>
    <scope>NUCLEOTIDE SEQUENCE [GENOMIC DNA]</scope>
</reference>
<accession>P13425</accession>
<keyword id="KW-0964">Secreted</keyword>
<keyword id="KW-0732">Signal</keyword>
<proteinExistence type="inferred from homology"/>
<comment type="function">
    <text evidence="1">Chorion membrane (egg shell) protein; plays a role in protecting the egg from the environment.</text>
</comment>
<comment type="subcellular location">
    <subcellularLocation>
        <location evidence="1">Secreted</location>
    </subcellularLocation>
</comment>
<comment type="similarity">
    <text evidence="3">Belongs to the chorion protein S15/S18 family.</text>
</comment>
<protein>
    <recommendedName>
        <fullName>Chorion protein S15</fullName>
    </recommendedName>
</protein>
<dbReference type="EMBL" id="X53422">
    <property type="protein sequence ID" value="CAA37505.1"/>
    <property type="molecule type" value="Genomic_DNA"/>
</dbReference>
<dbReference type="PIR" id="S06612">
    <property type="entry name" value="S06612"/>
</dbReference>
<dbReference type="EnsemblMetazoa" id="FBtr0464207">
    <property type="protein sequence ID" value="FBpp0414508"/>
    <property type="gene ID" value="FBgn0012320"/>
</dbReference>
<dbReference type="EnsemblMetazoa" id="XM_032743419.1">
    <property type="protein sequence ID" value="XP_032599310.1"/>
    <property type="gene ID" value="LOC6557092"/>
</dbReference>
<dbReference type="GO" id="GO:0005576">
    <property type="term" value="C:extracellular region"/>
    <property type="evidence" value="ECO:0007669"/>
    <property type="project" value="UniProtKB-SubCell"/>
</dbReference>
<feature type="signal peptide" evidence="2">
    <location>
        <begin position="1"/>
        <end position="18"/>
    </location>
</feature>
<feature type="chain" id="PRO_0000089612" description="Chorion protein S15">
    <location>
        <begin position="19"/>
        <end position="102"/>
    </location>
</feature>
<name>CH15_DROGR</name>
<gene>
    <name type="primary">Cp15</name>
    <name type="synonym">S15</name>
</gene>
<evidence type="ECO:0000250" key="1"/>
<evidence type="ECO:0000255" key="2"/>
<evidence type="ECO:0000305" key="3"/>